<keyword id="KW-0020">Allergen</keyword>
<keyword id="KW-0035">Amyloplast</keyword>
<keyword id="KW-0134">Cell wall</keyword>
<keyword id="KW-0961">Cell wall biogenesis/degradation</keyword>
<keyword id="KW-0903">Direct protein sequencing</keyword>
<keyword id="KW-0292">Fruit ripening</keyword>
<keyword id="KW-0325">Glycoprotein</keyword>
<keyword id="KW-0326">Glycosidase</keyword>
<keyword id="KW-0378">Hydrolase</keyword>
<keyword id="KW-0934">Plastid</keyword>
<keyword id="KW-0677">Repeat</keyword>
<keyword id="KW-0964">Secreted</keyword>
<keyword id="KW-0732">Signal</keyword>
<keyword id="KW-0865">Zymogen</keyword>
<evidence type="ECO:0000255" key="1"/>
<evidence type="ECO:0000255" key="2">
    <source>
        <dbReference type="PROSITE-ProRule" id="PRU10052"/>
    </source>
</evidence>
<evidence type="ECO:0000305" key="3"/>
<dbReference type="EC" id="3.2.1.15"/>
<dbReference type="EMBL" id="D37765">
    <property type="protein sequence ID" value="BAA07021.1"/>
    <property type="molecule type" value="mRNA"/>
</dbReference>
<dbReference type="EMBL" id="D29772">
    <property type="protein sequence ID" value="BAA06172.1"/>
    <property type="molecule type" value="mRNA"/>
</dbReference>
<dbReference type="PIR" id="JC2498">
    <property type="entry name" value="JC2498"/>
</dbReference>
<dbReference type="PIR" id="S48730">
    <property type="entry name" value="S48730"/>
</dbReference>
<dbReference type="SMR" id="P43212"/>
<dbReference type="Allergome" id="249">
    <property type="allergen name" value="Cry j 2"/>
</dbReference>
<dbReference type="Allergome" id="250">
    <property type="allergen name" value="Cry j 2.0101"/>
</dbReference>
<dbReference type="CAZy" id="GH28">
    <property type="family name" value="Glycoside Hydrolase Family 28"/>
</dbReference>
<dbReference type="GO" id="GO:0009501">
    <property type="term" value="C:amyloplast"/>
    <property type="evidence" value="ECO:0007669"/>
    <property type="project" value="UniProtKB-SubCell"/>
</dbReference>
<dbReference type="GO" id="GO:0005576">
    <property type="term" value="C:extracellular region"/>
    <property type="evidence" value="ECO:0007669"/>
    <property type="project" value="UniProtKB-SubCell"/>
</dbReference>
<dbReference type="GO" id="GO:0004650">
    <property type="term" value="F:polygalacturonase activity"/>
    <property type="evidence" value="ECO:0007669"/>
    <property type="project" value="UniProtKB-EC"/>
</dbReference>
<dbReference type="GO" id="GO:0005975">
    <property type="term" value="P:carbohydrate metabolic process"/>
    <property type="evidence" value="ECO:0007669"/>
    <property type="project" value="InterPro"/>
</dbReference>
<dbReference type="GO" id="GO:0071555">
    <property type="term" value="P:cell wall organization"/>
    <property type="evidence" value="ECO:0007669"/>
    <property type="project" value="UniProtKB-KW"/>
</dbReference>
<dbReference type="GO" id="GO:0009835">
    <property type="term" value="P:fruit ripening"/>
    <property type="evidence" value="ECO:0007669"/>
    <property type="project" value="UniProtKB-KW"/>
</dbReference>
<dbReference type="FunFam" id="2.160.20.10:FF:000032">
    <property type="entry name" value="Pectin lyase-like superfamily protein"/>
    <property type="match status" value="1"/>
</dbReference>
<dbReference type="Gene3D" id="2.160.20.10">
    <property type="entry name" value="Single-stranded right-handed beta-helix, Pectin lyase-like"/>
    <property type="match status" value="1"/>
</dbReference>
<dbReference type="InterPro" id="IPR000743">
    <property type="entry name" value="Glyco_hydro_28"/>
</dbReference>
<dbReference type="InterPro" id="IPR006626">
    <property type="entry name" value="PbH1"/>
</dbReference>
<dbReference type="InterPro" id="IPR012334">
    <property type="entry name" value="Pectin_lyas_fold"/>
</dbReference>
<dbReference type="InterPro" id="IPR011050">
    <property type="entry name" value="Pectin_lyase_fold/virulence"/>
</dbReference>
<dbReference type="PANTHER" id="PTHR31375">
    <property type="match status" value="1"/>
</dbReference>
<dbReference type="Pfam" id="PF17181">
    <property type="entry name" value="EPF"/>
    <property type="match status" value="1"/>
</dbReference>
<dbReference type="Pfam" id="PF00295">
    <property type="entry name" value="Glyco_hydro_28"/>
    <property type="match status" value="1"/>
</dbReference>
<dbReference type="SMART" id="SM00710">
    <property type="entry name" value="PbH1"/>
    <property type="match status" value="5"/>
</dbReference>
<dbReference type="SUPFAM" id="SSF51126">
    <property type="entry name" value="Pectin lyase-like"/>
    <property type="match status" value="1"/>
</dbReference>
<dbReference type="PROSITE" id="PS00502">
    <property type="entry name" value="POLYGALACTURONASE"/>
    <property type="match status" value="1"/>
</dbReference>
<sequence>MAMKFIAPMAFVAMQLIIMAAAEDQSAQIMLDSDIEQYLRSNRSLRKVEHSRHDAINIFNVEKYGAVGDGKHDCTEAFSTAWQAACKKPSAMLLVPGNKKFVVNNLFFNGPCQPHFTFKVDGIIAAYQNPASWKNNRIWLQFAKLTGFTLMGKGVIDGQGKQWWAGQCKWVNGREICNDRDRPTAIKFDFSTGLIIQGLKLMNSPEFHLVFGNCEGVKIIGISITAPRDSPNTDGIDIFASKNFHLQKNTIGTGDDCVAIGTGSSNIVIEDLICGPGHGISIGSLGRENSRAEVSYVHVNGAKFIDTQNGLRIKTWQGGSGMASHIIYENVEMINSENPILINQFYCTSASACQNQRSAVQIQDVTYKNIRGTSATAAAIQLKCSDSMPCKDIKLSDISLKLTSGKIASCLNDNANGYFSGHVIPACKNLSPSAKRKESKSHKHPKTVMVKNMGAYDKGNRTRILLGSRPPNCTNKCHGCSPCKAKLVIVHRIMPQEYYPQRWMCSRHGKIYHP</sequence>
<accession>P43212</accession>
<feature type="signal peptide" evidence="1">
    <location>
        <begin position="1"/>
        <end position="22"/>
    </location>
</feature>
<feature type="propeptide" id="PRO_0000024816" evidence="1">
    <location>
        <begin position="23"/>
        <end position="45"/>
    </location>
</feature>
<feature type="chain" id="PRO_0000024817" description="Polygalacturonase">
    <location>
        <begin position="46"/>
        <end position="433"/>
    </location>
</feature>
<feature type="propeptide" id="PRO_0000024818" evidence="1">
    <location>
        <begin position="434"/>
        <end position="514"/>
    </location>
</feature>
<feature type="repeat" description="PbH1 1">
    <location>
        <begin position="214"/>
        <end position="240"/>
    </location>
</feature>
<feature type="repeat" description="PbH1 2">
    <location>
        <begin position="241"/>
        <end position="262"/>
    </location>
</feature>
<feature type="repeat" description="PbH1 3">
    <location>
        <begin position="264"/>
        <end position="284"/>
    </location>
</feature>
<feature type="repeat" description="PbH1 4">
    <location>
        <begin position="294"/>
        <end position="315"/>
    </location>
</feature>
<feature type="repeat" description="PbH1 5">
    <location>
        <begin position="323"/>
        <end position="344"/>
    </location>
</feature>
<feature type="active site" description="Proton donor" evidence="2">
    <location>
        <position position="255"/>
    </location>
</feature>
<feature type="active site" evidence="2">
    <location>
        <position position="278"/>
    </location>
</feature>
<feature type="glycosylation site" description="N-linked (GlcNAc...) asparagine" evidence="1">
    <location>
        <position position="460"/>
    </location>
</feature>
<feature type="glycosylation site" description="N-linked (GlcNAc...) asparagine" evidence="1">
    <location>
        <position position="472"/>
    </location>
</feature>
<feature type="sequence conflict" description="In Ref. 2; BAA06172." evidence="3" ref="2">
    <original>F</original>
    <variation>L</variation>
    <location>
        <position position="5"/>
    </location>
</feature>
<feature type="sequence conflict" description="In Ref. 2; BAA06172." evidence="3" ref="2">
    <original>V</original>
    <variation>L</variation>
    <location>
        <position position="12"/>
    </location>
</feature>
<feature type="sequence conflict" description="In Ref. 2." evidence="3" ref="2">
    <original>DI</original>
    <variation>VV</variation>
    <location>
        <begin position="34"/>
        <end position="35"/>
    </location>
</feature>
<feature type="sequence conflict" description="In Ref. 2." evidence="3" ref="2">
    <original>Q</original>
    <variation>K</variation>
    <location>
        <position position="37"/>
    </location>
</feature>
<feature type="sequence conflict" description="In Ref. 2; BAA06172." evidence="3" ref="2">
    <original>K</original>
    <variation>N</variation>
    <location>
        <position position="88"/>
    </location>
</feature>
<feature type="sequence conflict" description="In Ref. 2; BAA06172." evidence="3" ref="2">
    <original>N</original>
    <variation>S</variation>
    <location>
        <position position="98"/>
    </location>
</feature>
<feature type="sequence conflict" description="In Ref. 2; BAA06172." evidence="3" ref="2">
    <original>K</original>
    <variation>E</variation>
    <location>
        <position position="451"/>
    </location>
</feature>
<feature type="sequence conflict" description="In Ref. 2; BAA06172." evidence="3" ref="2">
    <original>G</original>
    <variation>R</variation>
    <location>
        <position position="454"/>
    </location>
</feature>
<feature type="sequence conflict" description="In Ref. 2; BAA06172." evidence="3" ref="2">
    <original>M</original>
    <variation>I</variation>
    <location>
        <position position="504"/>
    </location>
</feature>
<feature type="sequence conflict" description="In Ref. 2; BAA06172." evidence="3" ref="2">
    <original>R</original>
    <variation>C</variation>
    <location>
        <position position="507"/>
    </location>
</feature>
<proteinExistence type="evidence at protein level"/>
<comment type="catalytic activity">
    <reaction>
        <text>(1,4-alpha-D-galacturonosyl)n+m + H2O = (1,4-alpha-D-galacturonosyl)n + (1,4-alpha-D-galacturonosyl)m.</text>
        <dbReference type="EC" id="3.2.1.15"/>
    </reaction>
</comment>
<comment type="subcellular location">
    <subcellularLocation>
        <location evidence="3">Secreted</location>
    </subcellularLocation>
    <subcellularLocation>
        <location evidence="3">Plastid</location>
        <location evidence="3">Amyloplast</location>
    </subcellularLocation>
    <subcellularLocation>
        <location evidence="3">Secreted</location>
        <location evidence="3">Cell wall</location>
    </subcellularLocation>
</comment>
<comment type="allergen">
    <text>Causes an allergic reaction in human.</text>
</comment>
<comment type="similarity">
    <text evidence="3">Belongs to the glycosyl hydrolase 28 family.</text>
</comment>
<name>PGLR2_CRYJA</name>
<reference key="1">
    <citation type="journal article" date="1994" name="FEBS Lett.">
        <title>Molecular cloning of the second major allergen, Cry j II, from Japanese cedar pollen.</title>
        <authorList>
            <person name="Namba M."/>
            <person name="Kurose M."/>
            <person name="Torigoe K."/>
            <person name="Hino K."/>
            <person name="Taniguchi Y."/>
            <person name="Fukuda S."/>
            <person name="Usui M."/>
            <person name="Kurimoto M."/>
        </authorList>
    </citation>
    <scope>NUCLEOTIDE SEQUENCE [MRNA]</scope>
    <scope>PARTIAL PROTEIN SEQUENCE</scope>
    <source>
        <tissue>Pollen</tissue>
    </source>
</reference>
<reference key="2">
    <citation type="journal article" date="1994" name="Biochem. Biophys. Res. Commun.">
        <title>cDNA cloning and expression of Cry j II the second major allergen of Japanese cedar pollen.</title>
        <authorList>
            <person name="Komiyama N."/>
            <person name="Sone T."/>
            <person name="Shimizu K."/>
            <person name="Morikubo K."/>
            <person name="Kino K."/>
        </authorList>
    </citation>
    <scope>NUCLEOTIDE SEQUENCE [MRNA]</scope>
    <source>
        <tissue>Pollen</tissue>
    </source>
</reference>
<reference key="3">
    <citation type="journal article" date="1990" name="Allergy">
        <title>Identification of the second major allergen of Japanese cedar pollen.</title>
        <authorList>
            <person name="Sakaguchi M."/>
            <person name="Inouye S."/>
            <person name="Taniai M."/>
            <person name="Ando S."/>
            <person name="Usui M."/>
            <person name="Matuhasi T."/>
        </authorList>
    </citation>
    <scope>PROTEIN SEQUENCE OF 55-64</scope>
</reference>
<organism>
    <name type="scientific">Cryptomeria japonica</name>
    <name type="common">Japanese cedar</name>
    <name type="synonym">Cupressus japonica</name>
    <dbReference type="NCBI Taxonomy" id="3369"/>
    <lineage>
        <taxon>Eukaryota</taxon>
        <taxon>Viridiplantae</taxon>
        <taxon>Streptophyta</taxon>
        <taxon>Embryophyta</taxon>
        <taxon>Tracheophyta</taxon>
        <taxon>Spermatophyta</taxon>
        <taxon>Pinopsida</taxon>
        <taxon>Pinidae</taxon>
        <taxon>Conifers II</taxon>
        <taxon>Cupressales</taxon>
        <taxon>Cupressaceae</taxon>
        <taxon>Cryptomeria</taxon>
    </lineage>
</organism>
<protein>
    <recommendedName>
        <fullName>Polygalacturonase</fullName>
        <shortName>PG</shortName>
        <ecNumber>3.2.1.15</ecNumber>
    </recommendedName>
    <alternativeName>
        <fullName>Allergen Cry j II</fullName>
    </alternativeName>
    <alternativeName>
        <fullName>Major pollen allergen Cry j 2</fullName>
    </alternativeName>
    <alternativeName>
        <fullName>Pectinase</fullName>
    </alternativeName>
    <allergenName>Cry j 2</allergenName>
</protein>